<dbReference type="EC" id="2.1.3.-" evidence="1"/>
<dbReference type="EMBL" id="CP001173">
    <property type="protein sequence ID" value="ACI27762.1"/>
    <property type="molecule type" value="Genomic_DNA"/>
</dbReference>
<dbReference type="RefSeq" id="WP_000655628.1">
    <property type="nucleotide sequence ID" value="NC_011333.1"/>
</dbReference>
<dbReference type="SMR" id="B5Z863"/>
<dbReference type="KEGG" id="hpg:HPG27_1009"/>
<dbReference type="HOGENOM" id="CLU_078475_0_0_7"/>
<dbReference type="Proteomes" id="UP000001735">
    <property type="component" value="Chromosome"/>
</dbReference>
<dbReference type="GO" id="GO:0016743">
    <property type="term" value="F:carboxyl- or carbamoyltransferase activity"/>
    <property type="evidence" value="ECO:0007669"/>
    <property type="project" value="UniProtKB-UniRule"/>
</dbReference>
<dbReference type="GO" id="GO:1904047">
    <property type="term" value="F:S-adenosyl-L-methionine binding"/>
    <property type="evidence" value="ECO:0007669"/>
    <property type="project" value="UniProtKB-UniRule"/>
</dbReference>
<dbReference type="GO" id="GO:0002098">
    <property type="term" value="P:tRNA wobble uridine modification"/>
    <property type="evidence" value="ECO:0007669"/>
    <property type="project" value="InterPro"/>
</dbReference>
<dbReference type="CDD" id="cd02440">
    <property type="entry name" value="AdoMet_MTases"/>
    <property type="match status" value="1"/>
</dbReference>
<dbReference type="FunFam" id="3.40.50.150:FF:000474">
    <property type="entry name" value="Carboxy-S-adenosyl-L-methionine synthase"/>
    <property type="match status" value="1"/>
</dbReference>
<dbReference type="Gene3D" id="3.40.50.150">
    <property type="entry name" value="Vaccinia Virus protein VP39"/>
    <property type="match status" value="1"/>
</dbReference>
<dbReference type="HAMAP" id="MF_01589">
    <property type="entry name" value="Cx_SAM_synthase"/>
    <property type="match status" value="1"/>
</dbReference>
<dbReference type="InterPro" id="IPR005271">
    <property type="entry name" value="CmoA"/>
</dbReference>
<dbReference type="InterPro" id="IPR041698">
    <property type="entry name" value="Methyltransf_25"/>
</dbReference>
<dbReference type="InterPro" id="IPR029063">
    <property type="entry name" value="SAM-dependent_MTases_sf"/>
</dbReference>
<dbReference type="NCBIfam" id="TIGR00740">
    <property type="entry name" value="carboxy-S-adenosyl-L-methionine synthase CmoA"/>
    <property type="match status" value="1"/>
</dbReference>
<dbReference type="PANTHER" id="PTHR43861:SF2">
    <property type="entry name" value="CARBOXY-S-ADENOSYL-L-METHIONINE SYNTHASE"/>
    <property type="match status" value="1"/>
</dbReference>
<dbReference type="PANTHER" id="PTHR43861">
    <property type="entry name" value="TRANS-ACONITATE 2-METHYLTRANSFERASE-RELATED"/>
    <property type="match status" value="1"/>
</dbReference>
<dbReference type="Pfam" id="PF13649">
    <property type="entry name" value="Methyltransf_25"/>
    <property type="match status" value="1"/>
</dbReference>
<dbReference type="PIRSF" id="PIRSF006325">
    <property type="entry name" value="MeTrfase_bac"/>
    <property type="match status" value="1"/>
</dbReference>
<dbReference type="SUPFAM" id="SSF53335">
    <property type="entry name" value="S-adenosyl-L-methionine-dependent methyltransferases"/>
    <property type="match status" value="1"/>
</dbReference>
<accession>B5Z863</accession>
<feature type="chain" id="PRO_1000201355" description="Carboxy-S-adenosyl-L-methionine synthase">
    <location>
        <begin position="1"/>
        <end position="239"/>
    </location>
</feature>
<feature type="binding site" evidence="1">
    <location>
        <position position="35"/>
    </location>
    <ligand>
        <name>S-adenosyl-L-methionine</name>
        <dbReference type="ChEBI" id="CHEBI:59789"/>
    </ligand>
</feature>
<feature type="binding site" evidence="1">
    <location>
        <begin position="64"/>
        <end position="66"/>
    </location>
    <ligand>
        <name>S-adenosyl-L-methionine</name>
        <dbReference type="ChEBI" id="CHEBI:59789"/>
    </ligand>
</feature>
<feature type="binding site" evidence="1">
    <location>
        <begin position="88"/>
        <end position="89"/>
    </location>
    <ligand>
        <name>S-adenosyl-L-methionine</name>
        <dbReference type="ChEBI" id="CHEBI:59789"/>
    </ligand>
</feature>
<feature type="binding site" evidence="1">
    <location>
        <position position="195"/>
    </location>
    <ligand>
        <name>S-adenosyl-L-methionine</name>
        <dbReference type="ChEBI" id="CHEBI:59789"/>
    </ligand>
</feature>
<keyword id="KW-1185">Reference proteome</keyword>
<keyword id="KW-0949">S-adenosyl-L-methionine</keyword>
<keyword id="KW-0808">Transferase</keyword>
<protein>
    <recommendedName>
        <fullName evidence="1">Carboxy-S-adenosyl-L-methionine synthase</fullName>
        <shortName evidence="1">Cx-SAM synthase</shortName>
        <ecNumber evidence="1">2.1.3.-</ecNumber>
    </recommendedName>
</protein>
<organism>
    <name type="scientific">Helicobacter pylori (strain G27)</name>
    <dbReference type="NCBI Taxonomy" id="563041"/>
    <lineage>
        <taxon>Bacteria</taxon>
        <taxon>Pseudomonadati</taxon>
        <taxon>Campylobacterota</taxon>
        <taxon>Epsilonproteobacteria</taxon>
        <taxon>Campylobacterales</taxon>
        <taxon>Helicobacteraceae</taxon>
        <taxon>Helicobacter</taxon>
    </lineage>
</organism>
<name>CMOA_HELPG</name>
<proteinExistence type="inferred from homology"/>
<evidence type="ECO:0000255" key="1">
    <source>
        <dbReference type="HAMAP-Rule" id="MF_01589"/>
    </source>
</evidence>
<sequence>MKDTLFNQSLNKRFCFDEKVAHVFDDMLERSIPYYYEMLDLGAYFIAQNLKENLNAKPLIYDLGCSTGNFFIALNQQIQQDIELVGIDNSMPMLKKAQEKLKDFKNARFECMDFLEVEFKEASAFSLLFVLQFVRPMQREVLLKKIYNSLALNGVLLVGEKIMSEDRILDKQMIELYYLYKQNQGYSHNEIAFKREALENVLVPYSLKENIALLESVGFKHVEAVFKWVNFTLLAARKT</sequence>
<comment type="function">
    <text evidence="1">Catalyzes the conversion of S-adenosyl-L-methionine (SAM) to carboxy-S-adenosyl-L-methionine (Cx-SAM).</text>
</comment>
<comment type="catalytic activity">
    <reaction evidence="1">
        <text>prephenate + S-adenosyl-L-methionine = carboxy-S-adenosyl-L-methionine + 3-phenylpyruvate + H2O</text>
        <dbReference type="Rhea" id="RHEA:51692"/>
        <dbReference type="ChEBI" id="CHEBI:15377"/>
        <dbReference type="ChEBI" id="CHEBI:18005"/>
        <dbReference type="ChEBI" id="CHEBI:29934"/>
        <dbReference type="ChEBI" id="CHEBI:59789"/>
        <dbReference type="ChEBI" id="CHEBI:134278"/>
    </reaction>
</comment>
<comment type="subunit">
    <text evidence="1">Homodimer.</text>
</comment>
<comment type="similarity">
    <text evidence="1">Belongs to the class I-like SAM-binding methyltransferase superfamily. Cx-SAM synthase family.</text>
</comment>
<gene>
    <name evidence="1" type="primary">cmoA</name>
    <name type="ordered locus">HPG27_1009</name>
</gene>
<reference key="1">
    <citation type="journal article" date="2009" name="J. Bacteriol.">
        <title>The complete genome sequence of Helicobacter pylori strain G27.</title>
        <authorList>
            <person name="Baltrus D.A."/>
            <person name="Amieva M.R."/>
            <person name="Covacci A."/>
            <person name="Lowe T.M."/>
            <person name="Merrell D.S."/>
            <person name="Ottemann K.M."/>
            <person name="Stein M."/>
            <person name="Salama N.R."/>
            <person name="Guillemin K."/>
        </authorList>
    </citation>
    <scope>NUCLEOTIDE SEQUENCE [LARGE SCALE GENOMIC DNA]</scope>
    <source>
        <strain>G27</strain>
    </source>
</reference>